<name>GSH1_ESCF3</name>
<dbReference type="EC" id="6.3.2.2" evidence="1"/>
<dbReference type="EMBL" id="CU928158">
    <property type="protein sequence ID" value="CAQ87942.1"/>
    <property type="molecule type" value="Genomic_DNA"/>
</dbReference>
<dbReference type="RefSeq" id="WP_000611806.1">
    <property type="nucleotide sequence ID" value="NC_011740.1"/>
</dbReference>
<dbReference type="SMR" id="B7LVZ1"/>
<dbReference type="GeneID" id="75058544"/>
<dbReference type="KEGG" id="efe:EFER_0381"/>
<dbReference type="HOGENOM" id="CLU_020728_3_0_6"/>
<dbReference type="OrthoDB" id="9803907at2"/>
<dbReference type="UniPathway" id="UPA00142">
    <property type="reaction ID" value="UER00209"/>
</dbReference>
<dbReference type="Proteomes" id="UP000000745">
    <property type="component" value="Chromosome"/>
</dbReference>
<dbReference type="GO" id="GO:0005829">
    <property type="term" value="C:cytosol"/>
    <property type="evidence" value="ECO:0007669"/>
    <property type="project" value="TreeGrafter"/>
</dbReference>
<dbReference type="GO" id="GO:0005524">
    <property type="term" value="F:ATP binding"/>
    <property type="evidence" value="ECO:0007669"/>
    <property type="project" value="UniProtKB-KW"/>
</dbReference>
<dbReference type="GO" id="GO:0004357">
    <property type="term" value="F:glutamate-cysteine ligase activity"/>
    <property type="evidence" value="ECO:0007669"/>
    <property type="project" value="UniProtKB-UniRule"/>
</dbReference>
<dbReference type="GO" id="GO:0046872">
    <property type="term" value="F:metal ion binding"/>
    <property type="evidence" value="ECO:0007669"/>
    <property type="project" value="TreeGrafter"/>
</dbReference>
<dbReference type="GO" id="GO:0006750">
    <property type="term" value="P:glutathione biosynthetic process"/>
    <property type="evidence" value="ECO:0007669"/>
    <property type="project" value="UniProtKB-UniRule"/>
</dbReference>
<dbReference type="FunFam" id="3.30.590.20:FF:000001">
    <property type="entry name" value="Glutamate--cysteine ligase"/>
    <property type="match status" value="1"/>
</dbReference>
<dbReference type="Gene3D" id="3.30.590.20">
    <property type="match status" value="1"/>
</dbReference>
<dbReference type="HAMAP" id="MF_00578">
    <property type="entry name" value="Glu_cys_ligase"/>
    <property type="match status" value="1"/>
</dbReference>
<dbReference type="InterPro" id="IPR014746">
    <property type="entry name" value="Gln_synth/guanido_kin_cat_dom"/>
</dbReference>
<dbReference type="InterPro" id="IPR007370">
    <property type="entry name" value="Glu_cys_ligase"/>
</dbReference>
<dbReference type="InterPro" id="IPR006334">
    <property type="entry name" value="Glut_cys_ligase"/>
</dbReference>
<dbReference type="NCBIfam" id="TIGR01434">
    <property type="entry name" value="glu_cys_ligase"/>
    <property type="match status" value="1"/>
</dbReference>
<dbReference type="PANTHER" id="PTHR38761">
    <property type="entry name" value="GLUTAMATE--CYSTEINE LIGASE"/>
    <property type="match status" value="1"/>
</dbReference>
<dbReference type="PANTHER" id="PTHR38761:SF1">
    <property type="entry name" value="GLUTAMATE--CYSTEINE LIGASE"/>
    <property type="match status" value="1"/>
</dbReference>
<dbReference type="Pfam" id="PF04262">
    <property type="entry name" value="Glu_cys_ligase"/>
    <property type="match status" value="1"/>
</dbReference>
<dbReference type="SUPFAM" id="SSF55931">
    <property type="entry name" value="Glutamine synthetase/guanido kinase"/>
    <property type="match status" value="1"/>
</dbReference>
<reference key="1">
    <citation type="journal article" date="2009" name="PLoS Genet.">
        <title>Organised genome dynamics in the Escherichia coli species results in highly diverse adaptive paths.</title>
        <authorList>
            <person name="Touchon M."/>
            <person name="Hoede C."/>
            <person name="Tenaillon O."/>
            <person name="Barbe V."/>
            <person name="Baeriswyl S."/>
            <person name="Bidet P."/>
            <person name="Bingen E."/>
            <person name="Bonacorsi S."/>
            <person name="Bouchier C."/>
            <person name="Bouvet O."/>
            <person name="Calteau A."/>
            <person name="Chiapello H."/>
            <person name="Clermont O."/>
            <person name="Cruveiller S."/>
            <person name="Danchin A."/>
            <person name="Diard M."/>
            <person name="Dossat C."/>
            <person name="Karoui M.E."/>
            <person name="Frapy E."/>
            <person name="Garry L."/>
            <person name="Ghigo J.M."/>
            <person name="Gilles A.M."/>
            <person name="Johnson J."/>
            <person name="Le Bouguenec C."/>
            <person name="Lescat M."/>
            <person name="Mangenot S."/>
            <person name="Martinez-Jehanne V."/>
            <person name="Matic I."/>
            <person name="Nassif X."/>
            <person name="Oztas S."/>
            <person name="Petit M.A."/>
            <person name="Pichon C."/>
            <person name="Rouy Z."/>
            <person name="Ruf C.S."/>
            <person name="Schneider D."/>
            <person name="Tourret J."/>
            <person name="Vacherie B."/>
            <person name="Vallenet D."/>
            <person name="Medigue C."/>
            <person name="Rocha E.P.C."/>
            <person name="Denamur E."/>
        </authorList>
    </citation>
    <scope>NUCLEOTIDE SEQUENCE [LARGE SCALE GENOMIC DNA]</scope>
    <source>
        <strain>ATCC 35469 / DSM 13698 / BCRC 15582 / CCUG 18766 / IAM 14443 / JCM 21226 / LMG 7866 / NBRC 102419 / NCTC 12128 / CDC 0568-73</strain>
    </source>
</reference>
<proteinExistence type="inferred from homology"/>
<evidence type="ECO:0000255" key="1">
    <source>
        <dbReference type="HAMAP-Rule" id="MF_00578"/>
    </source>
</evidence>
<feature type="chain" id="PRO_1000129596" description="Glutamate--cysteine ligase">
    <location>
        <begin position="1"/>
        <end position="518"/>
    </location>
</feature>
<comment type="catalytic activity">
    <reaction evidence="1">
        <text>L-cysteine + L-glutamate + ATP = gamma-L-glutamyl-L-cysteine + ADP + phosphate + H(+)</text>
        <dbReference type="Rhea" id="RHEA:13285"/>
        <dbReference type="ChEBI" id="CHEBI:15378"/>
        <dbReference type="ChEBI" id="CHEBI:29985"/>
        <dbReference type="ChEBI" id="CHEBI:30616"/>
        <dbReference type="ChEBI" id="CHEBI:35235"/>
        <dbReference type="ChEBI" id="CHEBI:43474"/>
        <dbReference type="ChEBI" id="CHEBI:58173"/>
        <dbReference type="ChEBI" id="CHEBI:456216"/>
        <dbReference type="EC" id="6.3.2.2"/>
    </reaction>
</comment>
<comment type="pathway">
    <text evidence="1">Sulfur metabolism; glutathione biosynthesis; glutathione from L-cysteine and L-glutamate: step 1/2.</text>
</comment>
<comment type="similarity">
    <text evidence="1">Belongs to the glutamate--cysteine ligase type 1 family. Type 1 subfamily.</text>
</comment>
<gene>
    <name evidence="1" type="primary">gshA</name>
    <name type="ordered locus">EFER_0381</name>
</gene>
<accession>B7LVZ1</accession>
<sequence>MIPDVSQALAWLEKHPQALKGIQRGLERETLRVNADGTLATTGHPEALGSALTHKWITTDFAEALLEFITPVDGDIEHMLTFMRDLHRYTARNMGDERMWPLSMPCYIAEGQDIELAQYGTSNTGRFKTLYREGLKNRYGALMQTISGVHYNFSLPMAFWQAKCGDISGADAKEKISAGYFRVIRNYYRFGWVIPYLFGASPAICSSFLQGKPTSLPFEKTECGMYYLPYATSLRLSDLGYTNKSQSNLGITFNDLYEYVAGLKQAIKTPSEEYAKIGIEKDGKRLQINSNVLQIENELYAPIRPKRVTRSGESPSDALLRGGIEYIEVRSLDINPFSPIGVDEQQVRFLDLFMVWCALADAPEMSSSELACTRVNWNRVILEGRKPGLTLGIGCETAQFPLPQVGKDLFRDLKRVAQTLDSINGGEAYQKVCDELVACFDNPDLTFSARILRSMIDTGIGGTGKAFAEAYRNLLREEPLEILREEDFVAEREASVRRQQEMEAADTEPFAVWLEKHA</sequence>
<protein>
    <recommendedName>
        <fullName evidence="1">Glutamate--cysteine ligase</fullName>
        <ecNumber evidence="1">6.3.2.2</ecNumber>
    </recommendedName>
    <alternativeName>
        <fullName evidence="1">Gamma-ECS</fullName>
        <shortName evidence="1">GCS</shortName>
    </alternativeName>
    <alternativeName>
        <fullName evidence="1">Gamma-glutamylcysteine synthetase</fullName>
    </alternativeName>
</protein>
<organism>
    <name type="scientific">Escherichia fergusonii (strain ATCC 35469 / DSM 13698 / CCUG 18766 / IAM 14443 / JCM 21226 / LMG 7866 / NBRC 102419 / NCTC 12128 / CDC 0568-73)</name>
    <dbReference type="NCBI Taxonomy" id="585054"/>
    <lineage>
        <taxon>Bacteria</taxon>
        <taxon>Pseudomonadati</taxon>
        <taxon>Pseudomonadota</taxon>
        <taxon>Gammaproteobacteria</taxon>
        <taxon>Enterobacterales</taxon>
        <taxon>Enterobacteriaceae</taxon>
        <taxon>Escherichia</taxon>
    </lineage>
</organism>
<keyword id="KW-0067">ATP-binding</keyword>
<keyword id="KW-0317">Glutathione biosynthesis</keyword>
<keyword id="KW-0436">Ligase</keyword>
<keyword id="KW-0547">Nucleotide-binding</keyword>